<protein>
    <recommendedName>
        <fullName evidence="1">Dihydroxy-acid dehydratase</fullName>
        <shortName evidence="1">DAD</shortName>
        <ecNumber evidence="1">4.2.1.9</ecNumber>
    </recommendedName>
</protein>
<feature type="chain" id="PRO_1000000999" description="Dihydroxy-acid dehydratase">
    <location>
        <begin position="1"/>
        <end position="560"/>
    </location>
</feature>
<feature type="active site" description="Proton acceptor" evidence="1">
    <location>
        <position position="474"/>
    </location>
</feature>
<feature type="binding site" evidence="1">
    <location>
        <position position="52"/>
    </location>
    <ligand>
        <name>[2Fe-2S] cluster</name>
        <dbReference type="ChEBI" id="CHEBI:190135"/>
    </ligand>
</feature>
<feature type="binding site" evidence="1">
    <location>
        <position position="84"/>
    </location>
    <ligand>
        <name>Mg(2+)</name>
        <dbReference type="ChEBI" id="CHEBI:18420"/>
    </ligand>
</feature>
<feature type="binding site" evidence="1">
    <location>
        <position position="125"/>
    </location>
    <ligand>
        <name>[2Fe-2S] cluster</name>
        <dbReference type="ChEBI" id="CHEBI:190135"/>
    </ligand>
</feature>
<feature type="binding site" evidence="1">
    <location>
        <position position="126"/>
    </location>
    <ligand>
        <name>Mg(2+)</name>
        <dbReference type="ChEBI" id="CHEBI:18420"/>
    </ligand>
</feature>
<feature type="binding site" description="via carbamate group" evidence="1">
    <location>
        <position position="127"/>
    </location>
    <ligand>
        <name>Mg(2+)</name>
        <dbReference type="ChEBI" id="CHEBI:18420"/>
    </ligand>
</feature>
<feature type="binding site" evidence="1">
    <location>
        <position position="197"/>
    </location>
    <ligand>
        <name>[2Fe-2S] cluster</name>
        <dbReference type="ChEBI" id="CHEBI:190135"/>
    </ligand>
</feature>
<feature type="binding site" evidence="1">
    <location>
        <position position="448"/>
    </location>
    <ligand>
        <name>Mg(2+)</name>
        <dbReference type="ChEBI" id="CHEBI:18420"/>
    </ligand>
</feature>
<feature type="modified residue" description="N6-carboxylysine" evidence="1">
    <location>
        <position position="127"/>
    </location>
</feature>
<keyword id="KW-0001">2Fe-2S</keyword>
<keyword id="KW-0028">Amino-acid biosynthesis</keyword>
<keyword id="KW-0100">Branched-chain amino acid biosynthesis</keyword>
<keyword id="KW-0408">Iron</keyword>
<keyword id="KW-0411">Iron-sulfur</keyword>
<keyword id="KW-0456">Lyase</keyword>
<keyword id="KW-0460">Magnesium</keyword>
<keyword id="KW-0479">Metal-binding</keyword>
<organism>
    <name type="scientific">Leptospira borgpetersenii serovar Hardjo-bovis (strain L550)</name>
    <dbReference type="NCBI Taxonomy" id="355276"/>
    <lineage>
        <taxon>Bacteria</taxon>
        <taxon>Pseudomonadati</taxon>
        <taxon>Spirochaetota</taxon>
        <taxon>Spirochaetia</taxon>
        <taxon>Leptospirales</taxon>
        <taxon>Leptospiraceae</taxon>
        <taxon>Leptospira</taxon>
    </lineage>
</organism>
<name>ILVD_LEPBL</name>
<sequence length="560" mass="59445">MSDILKKRSSMTTDGDNRAPNRAMLRAVGFTDEDFHKPMIGIASTWSEVTPCNIHINKLAEKVKEGVRTAGGVPQIYGTITVSDGITMGHEGMHFSLPSREVIADSIEIVSNAMRHDGVIAIGGCDKNMPGCLMALCRIDAPSIFVYGGTILPGHCDGQDVDIVSIFEAVGKFNAGKISREEFIRIEQNACPGAGSCGGMYTANTMSSAIEALGMSLPGSASMPAVSSRKSEDCYEAGKALINLIQKGVTPKRILTKKAFENAITVVLVLGGSTNAVLHLIAIAKEIGVDLTLEDFDRISKKTPHLADLKPGGRYAMTDLDKVGGVHGVMKYLLKEGMLHGDCLTVTGKTIAENLMDMPDLVPNQTIVRKKSEALHPSGPLVILKGNLAPEGAVAKISGLKKISITGPAKVFESEDDCFNAIMTDQIKPGDVIIIRYEGPKGGPGMREMLAVTSALVGKGLGEDVGLMTDGRFSGGTHGLVVGHISPEAFDGGPIAIVQNGDAVTIDSGKNLLQVEISQEEIQKRLKNWKPIEPRYKSGVLAKYAKLVQSATNGAITNLL</sequence>
<gene>
    <name evidence="1" type="primary">ilvD</name>
    <name type="ordered locus">LBL_0987</name>
</gene>
<accession>Q053H5</accession>
<evidence type="ECO:0000255" key="1">
    <source>
        <dbReference type="HAMAP-Rule" id="MF_00012"/>
    </source>
</evidence>
<comment type="function">
    <text evidence="1">Functions in the biosynthesis of branched-chain amino acids. Catalyzes the dehydration of (2R,3R)-2,3-dihydroxy-3-methylpentanoate (2,3-dihydroxy-3-methylvalerate) into 2-oxo-3-methylpentanoate (2-oxo-3-methylvalerate) and of (2R)-2,3-dihydroxy-3-methylbutanoate (2,3-dihydroxyisovalerate) into 2-oxo-3-methylbutanoate (2-oxoisovalerate), the penultimate precursor to L-isoleucine and L-valine, respectively.</text>
</comment>
<comment type="catalytic activity">
    <reaction evidence="1">
        <text>(2R)-2,3-dihydroxy-3-methylbutanoate = 3-methyl-2-oxobutanoate + H2O</text>
        <dbReference type="Rhea" id="RHEA:24809"/>
        <dbReference type="ChEBI" id="CHEBI:11851"/>
        <dbReference type="ChEBI" id="CHEBI:15377"/>
        <dbReference type="ChEBI" id="CHEBI:49072"/>
        <dbReference type="EC" id="4.2.1.9"/>
    </reaction>
    <physiologicalReaction direction="left-to-right" evidence="1">
        <dbReference type="Rhea" id="RHEA:24810"/>
    </physiologicalReaction>
</comment>
<comment type="catalytic activity">
    <reaction evidence="1">
        <text>(2R,3R)-2,3-dihydroxy-3-methylpentanoate = (S)-3-methyl-2-oxopentanoate + H2O</text>
        <dbReference type="Rhea" id="RHEA:27694"/>
        <dbReference type="ChEBI" id="CHEBI:15377"/>
        <dbReference type="ChEBI" id="CHEBI:35146"/>
        <dbReference type="ChEBI" id="CHEBI:49258"/>
        <dbReference type="EC" id="4.2.1.9"/>
    </reaction>
    <physiologicalReaction direction="left-to-right" evidence="1">
        <dbReference type="Rhea" id="RHEA:27695"/>
    </physiologicalReaction>
</comment>
<comment type="cofactor">
    <cofactor evidence="1">
        <name>[2Fe-2S] cluster</name>
        <dbReference type="ChEBI" id="CHEBI:190135"/>
    </cofactor>
    <text evidence="1">Binds 1 [2Fe-2S] cluster per subunit. This cluster acts as a Lewis acid cofactor.</text>
</comment>
<comment type="cofactor">
    <cofactor evidence="1">
        <name>Mg(2+)</name>
        <dbReference type="ChEBI" id="CHEBI:18420"/>
    </cofactor>
</comment>
<comment type="pathway">
    <text evidence="1">Amino-acid biosynthesis; L-isoleucine biosynthesis; L-isoleucine from 2-oxobutanoate: step 3/4.</text>
</comment>
<comment type="pathway">
    <text evidence="1">Amino-acid biosynthesis; L-valine biosynthesis; L-valine from pyruvate: step 3/4.</text>
</comment>
<comment type="subunit">
    <text evidence="1">Homodimer.</text>
</comment>
<comment type="similarity">
    <text evidence="1">Belongs to the IlvD/Edd family.</text>
</comment>
<dbReference type="EC" id="4.2.1.9" evidence="1"/>
<dbReference type="EMBL" id="CP000348">
    <property type="protein sequence ID" value="ABJ78520.1"/>
    <property type="molecule type" value="Genomic_DNA"/>
</dbReference>
<dbReference type="RefSeq" id="WP_011669797.1">
    <property type="nucleotide sequence ID" value="NC_008508.1"/>
</dbReference>
<dbReference type="SMR" id="Q053H5"/>
<dbReference type="KEGG" id="lbl:LBL_0987"/>
<dbReference type="PATRIC" id="fig|355276.3.peg.1260"/>
<dbReference type="HOGENOM" id="CLU_014271_4_2_12"/>
<dbReference type="UniPathway" id="UPA00047">
    <property type="reaction ID" value="UER00057"/>
</dbReference>
<dbReference type="UniPathway" id="UPA00049">
    <property type="reaction ID" value="UER00061"/>
</dbReference>
<dbReference type="GO" id="GO:0051537">
    <property type="term" value="F:2 iron, 2 sulfur cluster binding"/>
    <property type="evidence" value="ECO:0007669"/>
    <property type="project" value="UniProtKB-UniRule"/>
</dbReference>
<dbReference type="GO" id="GO:0004160">
    <property type="term" value="F:dihydroxy-acid dehydratase activity"/>
    <property type="evidence" value="ECO:0007669"/>
    <property type="project" value="UniProtKB-UniRule"/>
</dbReference>
<dbReference type="GO" id="GO:0000287">
    <property type="term" value="F:magnesium ion binding"/>
    <property type="evidence" value="ECO:0007669"/>
    <property type="project" value="UniProtKB-UniRule"/>
</dbReference>
<dbReference type="GO" id="GO:0009097">
    <property type="term" value="P:isoleucine biosynthetic process"/>
    <property type="evidence" value="ECO:0007669"/>
    <property type="project" value="UniProtKB-UniRule"/>
</dbReference>
<dbReference type="GO" id="GO:0009099">
    <property type="term" value="P:L-valine biosynthetic process"/>
    <property type="evidence" value="ECO:0007669"/>
    <property type="project" value="UniProtKB-UniRule"/>
</dbReference>
<dbReference type="FunFam" id="3.50.30.80:FF:000001">
    <property type="entry name" value="Dihydroxy-acid dehydratase"/>
    <property type="match status" value="1"/>
</dbReference>
<dbReference type="Gene3D" id="3.50.30.80">
    <property type="entry name" value="IlvD/EDD C-terminal domain-like"/>
    <property type="match status" value="1"/>
</dbReference>
<dbReference type="HAMAP" id="MF_00012">
    <property type="entry name" value="IlvD"/>
    <property type="match status" value="1"/>
</dbReference>
<dbReference type="InterPro" id="IPR050165">
    <property type="entry name" value="DHAD_IlvD/Edd"/>
</dbReference>
<dbReference type="InterPro" id="IPR042096">
    <property type="entry name" value="Dihydro-acid_dehy_C"/>
</dbReference>
<dbReference type="InterPro" id="IPR004404">
    <property type="entry name" value="DihydroxyA_deHydtase"/>
</dbReference>
<dbReference type="InterPro" id="IPR020558">
    <property type="entry name" value="DiOHA_6PGluconate_deHydtase_CS"/>
</dbReference>
<dbReference type="InterPro" id="IPR056740">
    <property type="entry name" value="ILV_EDD_C"/>
</dbReference>
<dbReference type="InterPro" id="IPR000581">
    <property type="entry name" value="ILV_EDD_N"/>
</dbReference>
<dbReference type="InterPro" id="IPR037237">
    <property type="entry name" value="IlvD/EDD_N"/>
</dbReference>
<dbReference type="NCBIfam" id="TIGR00110">
    <property type="entry name" value="ilvD"/>
    <property type="match status" value="1"/>
</dbReference>
<dbReference type="NCBIfam" id="NF002068">
    <property type="entry name" value="PRK00911.1"/>
    <property type="match status" value="1"/>
</dbReference>
<dbReference type="PANTHER" id="PTHR21000">
    <property type="entry name" value="DIHYDROXY-ACID DEHYDRATASE DAD"/>
    <property type="match status" value="1"/>
</dbReference>
<dbReference type="PANTHER" id="PTHR21000:SF5">
    <property type="entry name" value="DIHYDROXY-ACID DEHYDRATASE, MITOCHONDRIAL"/>
    <property type="match status" value="1"/>
</dbReference>
<dbReference type="Pfam" id="PF24877">
    <property type="entry name" value="ILV_EDD_C"/>
    <property type="match status" value="1"/>
</dbReference>
<dbReference type="Pfam" id="PF00920">
    <property type="entry name" value="ILVD_EDD_N"/>
    <property type="match status" value="1"/>
</dbReference>
<dbReference type="SUPFAM" id="SSF143975">
    <property type="entry name" value="IlvD/EDD N-terminal domain-like"/>
    <property type="match status" value="1"/>
</dbReference>
<dbReference type="SUPFAM" id="SSF52016">
    <property type="entry name" value="LeuD/IlvD-like"/>
    <property type="match status" value="1"/>
</dbReference>
<dbReference type="PROSITE" id="PS00886">
    <property type="entry name" value="ILVD_EDD_1"/>
    <property type="match status" value="1"/>
</dbReference>
<dbReference type="PROSITE" id="PS00887">
    <property type="entry name" value="ILVD_EDD_2"/>
    <property type="match status" value="1"/>
</dbReference>
<proteinExistence type="inferred from homology"/>
<reference key="1">
    <citation type="journal article" date="2006" name="Proc. Natl. Acad. Sci. U.S.A.">
        <title>Genome reduction in Leptospira borgpetersenii reflects limited transmission potential.</title>
        <authorList>
            <person name="Bulach D.M."/>
            <person name="Zuerner R.L."/>
            <person name="Wilson P."/>
            <person name="Seemann T."/>
            <person name="McGrath A."/>
            <person name="Cullen P.A."/>
            <person name="Davis J."/>
            <person name="Johnson M."/>
            <person name="Kuczek E."/>
            <person name="Alt D.P."/>
            <person name="Peterson-Burch B."/>
            <person name="Coppel R.L."/>
            <person name="Rood J.I."/>
            <person name="Davies J.K."/>
            <person name="Adler B."/>
        </authorList>
    </citation>
    <scope>NUCLEOTIDE SEQUENCE [LARGE SCALE GENOMIC DNA]</scope>
    <source>
        <strain>L550</strain>
    </source>
</reference>